<organism>
    <name type="scientific">Roseiflexus castenholzii (strain DSM 13941 / HLO8)</name>
    <dbReference type="NCBI Taxonomy" id="383372"/>
    <lineage>
        <taxon>Bacteria</taxon>
        <taxon>Bacillati</taxon>
        <taxon>Chloroflexota</taxon>
        <taxon>Chloroflexia</taxon>
        <taxon>Chloroflexales</taxon>
        <taxon>Roseiflexineae</taxon>
        <taxon>Roseiflexaceae</taxon>
        <taxon>Roseiflexus</taxon>
    </lineage>
</organism>
<keyword id="KW-1185">Reference proteome</keyword>
<keyword id="KW-0694">RNA-binding</keyword>
<keyword id="KW-0804">Transcription</keyword>
<keyword id="KW-0889">Transcription antitermination</keyword>
<keyword id="KW-0805">Transcription regulation</keyword>
<gene>
    <name evidence="1" type="primary">nusB</name>
    <name type="ordered locus">Rcas_3255</name>
</gene>
<name>NUSB_ROSCS</name>
<dbReference type="EMBL" id="CP000804">
    <property type="protein sequence ID" value="ABU59307.1"/>
    <property type="molecule type" value="Genomic_DNA"/>
</dbReference>
<dbReference type="RefSeq" id="WP_012121731.1">
    <property type="nucleotide sequence ID" value="NC_009767.1"/>
</dbReference>
<dbReference type="SMR" id="A7NP12"/>
<dbReference type="STRING" id="383372.Rcas_3255"/>
<dbReference type="KEGG" id="rca:Rcas_3255"/>
<dbReference type="eggNOG" id="COG0781">
    <property type="taxonomic scope" value="Bacteria"/>
</dbReference>
<dbReference type="HOGENOM" id="CLU_087843_3_2_0"/>
<dbReference type="OrthoDB" id="9811381at2"/>
<dbReference type="Proteomes" id="UP000000263">
    <property type="component" value="Chromosome"/>
</dbReference>
<dbReference type="GO" id="GO:0005829">
    <property type="term" value="C:cytosol"/>
    <property type="evidence" value="ECO:0007669"/>
    <property type="project" value="TreeGrafter"/>
</dbReference>
<dbReference type="GO" id="GO:0003723">
    <property type="term" value="F:RNA binding"/>
    <property type="evidence" value="ECO:0007669"/>
    <property type="project" value="UniProtKB-UniRule"/>
</dbReference>
<dbReference type="GO" id="GO:0006353">
    <property type="term" value="P:DNA-templated transcription termination"/>
    <property type="evidence" value="ECO:0007669"/>
    <property type="project" value="UniProtKB-UniRule"/>
</dbReference>
<dbReference type="GO" id="GO:0031564">
    <property type="term" value="P:transcription antitermination"/>
    <property type="evidence" value="ECO:0007669"/>
    <property type="project" value="UniProtKB-KW"/>
</dbReference>
<dbReference type="Gene3D" id="1.10.940.10">
    <property type="entry name" value="NusB-like"/>
    <property type="match status" value="1"/>
</dbReference>
<dbReference type="HAMAP" id="MF_00073">
    <property type="entry name" value="NusB"/>
    <property type="match status" value="1"/>
</dbReference>
<dbReference type="InterPro" id="IPR035926">
    <property type="entry name" value="NusB-like_sf"/>
</dbReference>
<dbReference type="InterPro" id="IPR011605">
    <property type="entry name" value="NusB_fam"/>
</dbReference>
<dbReference type="InterPro" id="IPR006027">
    <property type="entry name" value="NusB_RsmB_TIM44"/>
</dbReference>
<dbReference type="NCBIfam" id="TIGR01951">
    <property type="entry name" value="nusB"/>
    <property type="match status" value="1"/>
</dbReference>
<dbReference type="PANTHER" id="PTHR11078:SF3">
    <property type="entry name" value="ANTITERMINATION NUSB DOMAIN-CONTAINING PROTEIN"/>
    <property type="match status" value="1"/>
</dbReference>
<dbReference type="PANTHER" id="PTHR11078">
    <property type="entry name" value="N UTILIZATION SUBSTANCE PROTEIN B-RELATED"/>
    <property type="match status" value="1"/>
</dbReference>
<dbReference type="Pfam" id="PF01029">
    <property type="entry name" value="NusB"/>
    <property type="match status" value="1"/>
</dbReference>
<dbReference type="SUPFAM" id="SSF48013">
    <property type="entry name" value="NusB-like"/>
    <property type="match status" value="1"/>
</dbReference>
<reference key="1">
    <citation type="submission" date="2007-08" db="EMBL/GenBank/DDBJ databases">
        <title>Complete sequence of Roseiflexus castenholzii DSM 13941.</title>
        <authorList>
            <consortium name="US DOE Joint Genome Institute"/>
            <person name="Copeland A."/>
            <person name="Lucas S."/>
            <person name="Lapidus A."/>
            <person name="Barry K."/>
            <person name="Glavina del Rio T."/>
            <person name="Dalin E."/>
            <person name="Tice H."/>
            <person name="Pitluck S."/>
            <person name="Thompson L.S."/>
            <person name="Brettin T."/>
            <person name="Bruce D."/>
            <person name="Detter J.C."/>
            <person name="Han C."/>
            <person name="Tapia R."/>
            <person name="Schmutz J."/>
            <person name="Larimer F."/>
            <person name="Land M."/>
            <person name="Hauser L."/>
            <person name="Kyrpides N."/>
            <person name="Mikhailova N."/>
            <person name="Bryant D.A."/>
            <person name="Hanada S."/>
            <person name="Tsukatani Y."/>
            <person name="Richardson P."/>
        </authorList>
    </citation>
    <scope>NUCLEOTIDE SEQUENCE [LARGE SCALE GENOMIC DNA]</scope>
    <source>
        <strain>DSM 13941 / HLO8</strain>
    </source>
</reference>
<accession>A7NP12</accession>
<feature type="chain" id="PRO_1000075198" description="Transcription antitermination protein NusB">
    <location>
        <begin position="1"/>
        <end position="142"/>
    </location>
</feature>
<protein>
    <recommendedName>
        <fullName evidence="1">Transcription antitermination protein NusB</fullName>
    </recommendedName>
    <alternativeName>
        <fullName evidence="1">Antitermination factor NusB</fullName>
    </alternativeName>
</protein>
<sequence length="142" mass="16077">MASLRHRVRAIALQILFELDATDHPPDQVVGRRLEEEQLPPEGERFLRRLVFGAWEHAAHLDRIIEEAAPNWPVSQMPGVDKAILRIALFEALIDKEEKTPLKAIINEAVELAKQYGSDNSSRFVNGVLGTVVSRYRERSKG</sequence>
<comment type="function">
    <text evidence="1">Involved in transcription antitermination. Required for transcription of ribosomal RNA (rRNA) genes. Binds specifically to the boxA antiterminator sequence of the ribosomal RNA (rrn) operons.</text>
</comment>
<comment type="similarity">
    <text evidence="1">Belongs to the NusB family.</text>
</comment>
<proteinExistence type="inferred from homology"/>
<evidence type="ECO:0000255" key="1">
    <source>
        <dbReference type="HAMAP-Rule" id="MF_00073"/>
    </source>
</evidence>